<proteinExistence type="inferred from homology"/>
<protein>
    <recommendedName>
        <fullName evidence="1">Isoleucine--tRNA ligase</fullName>
        <ecNumber evidence="1">6.1.1.5</ecNumber>
    </recommendedName>
    <alternativeName>
        <fullName evidence="1">Isoleucyl-tRNA synthetase</fullName>
        <shortName evidence="1">IleRS</shortName>
    </alternativeName>
</protein>
<sequence>MSDYKSTLNLPETEFPMRGNLANREPAMLERWNKDKLYQQIRDSRIGRKPFILHDGPPYANGSIHIGHSVNKILKDIIIKSKTLAGFDAPYVPGWDCHGLPIELKVEQKVGKPGQKISAAEFREECRKYAAAQVDGQREDFIRLGVLGDWHKPYLTMDFATEANIVRSLAKVISNGHLQKGVKPVHWCTDCGSALAEAEVEYEDKTSPAIDVGFNVVDKPALLAKFGVAQYNHDIAMVIWTTTPWTLPANRALAIAADLEYVLVSFTKEDVTRAIVVADVLHEDCVKRFGAESFEVLGRIKGSELELTRFAHPFLDFDVPVILGDHVTTDAGTGVVHTAPGHGQDDFVVGQKYGLEVANPVGDNGVYKADTPFFAGQHVFKANDNVVALLKEKGALLNHVAYRHSYPHCWRHKTPIIFRATPQWFISMDNQGLRSTALSEIQNTQWIPDWGQSRIETMVANRPDWCISRQRTWGVPITLFVNKENEELHPNSVSLMERVANRIEQHGIQAWWDLDAAELLGDEAEQYRKVTDTLDVWYDSGSTFETVVAARPEFQGHGVDLYLEGSDQHRGWFMSSLMLSTAMHAKAPYKQVLTHGFTVDGKGRKMSKSIGNVIAPQEVTNKLGADILRLWVAATDYSGEMSVSDEILNRAADSYRRIRNTGRFLLANLNGFEPEADMVAVADMVALDRWMVRRAAKVQSEIIAAYEQYNFHLVTHKLMQFCSVELGSFYLDIIKDRQYTAKRESHARRSCQSALFHIAEAMVRWIAPVLSFTADEIWQLLPGKREAYVFTQEWYEGLESITLESDLADSHWELLLSVRNEVNKELEQARRDKVLGGSLEATVTLYADTELAAKVAVLGDELRFVLLTSDAKVLPIDAAPESAVATELAGLKVLVAKTEAAKCERCWHHREDVGSVEAHPSLCGRCVTNIEGEGEARAFA</sequence>
<name>SYI_SHEAM</name>
<organism>
    <name type="scientific">Shewanella amazonensis (strain ATCC BAA-1098 / SB2B)</name>
    <dbReference type="NCBI Taxonomy" id="326297"/>
    <lineage>
        <taxon>Bacteria</taxon>
        <taxon>Pseudomonadati</taxon>
        <taxon>Pseudomonadota</taxon>
        <taxon>Gammaproteobacteria</taxon>
        <taxon>Alteromonadales</taxon>
        <taxon>Shewanellaceae</taxon>
        <taxon>Shewanella</taxon>
    </lineage>
</organism>
<comment type="function">
    <text evidence="1">Catalyzes the attachment of isoleucine to tRNA(Ile). As IleRS can inadvertently accommodate and process structurally similar amino acids such as valine, to avoid such errors it has two additional distinct tRNA(Ile)-dependent editing activities. One activity is designated as 'pretransfer' editing and involves the hydrolysis of activated Val-AMP. The other activity is designated 'posttransfer' editing and involves deacylation of mischarged Val-tRNA(Ile).</text>
</comment>
<comment type="catalytic activity">
    <reaction evidence="1">
        <text>tRNA(Ile) + L-isoleucine + ATP = L-isoleucyl-tRNA(Ile) + AMP + diphosphate</text>
        <dbReference type="Rhea" id="RHEA:11060"/>
        <dbReference type="Rhea" id="RHEA-COMP:9666"/>
        <dbReference type="Rhea" id="RHEA-COMP:9695"/>
        <dbReference type="ChEBI" id="CHEBI:30616"/>
        <dbReference type="ChEBI" id="CHEBI:33019"/>
        <dbReference type="ChEBI" id="CHEBI:58045"/>
        <dbReference type="ChEBI" id="CHEBI:78442"/>
        <dbReference type="ChEBI" id="CHEBI:78528"/>
        <dbReference type="ChEBI" id="CHEBI:456215"/>
        <dbReference type="EC" id="6.1.1.5"/>
    </reaction>
</comment>
<comment type="cofactor">
    <cofactor evidence="1">
        <name>Zn(2+)</name>
        <dbReference type="ChEBI" id="CHEBI:29105"/>
    </cofactor>
    <text evidence="1">Binds 1 zinc ion per subunit.</text>
</comment>
<comment type="subunit">
    <text evidence="1">Monomer.</text>
</comment>
<comment type="subcellular location">
    <subcellularLocation>
        <location evidence="1">Cytoplasm</location>
    </subcellularLocation>
</comment>
<comment type="domain">
    <text evidence="1">IleRS has two distinct active sites: one for aminoacylation and one for editing. The misactivated valine is translocated from the active site to the editing site, which sterically excludes the correctly activated isoleucine. The single editing site contains two valyl binding pockets, one specific for each substrate (Val-AMP or Val-tRNA(Ile)).</text>
</comment>
<comment type="similarity">
    <text evidence="1">Belongs to the class-I aminoacyl-tRNA synthetase family. IleS type 1 subfamily.</text>
</comment>
<reference key="1">
    <citation type="submission" date="2006-12" db="EMBL/GenBank/DDBJ databases">
        <title>Complete sequence of Shewanella amazonensis SB2B.</title>
        <authorList>
            <consortium name="US DOE Joint Genome Institute"/>
            <person name="Copeland A."/>
            <person name="Lucas S."/>
            <person name="Lapidus A."/>
            <person name="Barry K."/>
            <person name="Detter J.C."/>
            <person name="Glavina del Rio T."/>
            <person name="Hammon N."/>
            <person name="Israni S."/>
            <person name="Dalin E."/>
            <person name="Tice H."/>
            <person name="Pitluck S."/>
            <person name="Munk A.C."/>
            <person name="Brettin T."/>
            <person name="Bruce D."/>
            <person name="Han C."/>
            <person name="Tapia R."/>
            <person name="Gilna P."/>
            <person name="Schmutz J."/>
            <person name="Larimer F."/>
            <person name="Land M."/>
            <person name="Hauser L."/>
            <person name="Kyrpides N."/>
            <person name="Mikhailova N."/>
            <person name="Fredrickson J."/>
            <person name="Richardson P."/>
        </authorList>
    </citation>
    <scope>NUCLEOTIDE SEQUENCE [LARGE SCALE GENOMIC DNA]</scope>
    <source>
        <strain>ATCC BAA-1098 / SB2B</strain>
    </source>
</reference>
<evidence type="ECO:0000255" key="1">
    <source>
        <dbReference type="HAMAP-Rule" id="MF_02002"/>
    </source>
</evidence>
<keyword id="KW-0030">Aminoacyl-tRNA synthetase</keyword>
<keyword id="KW-0067">ATP-binding</keyword>
<keyword id="KW-0963">Cytoplasm</keyword>
<keyword id="KW-0436">Ligase</keyword>
<keyword id="KW-0479">Metal-binding</keyword>
<keyword id="KW-0547">Nucleotide-binding</keyword>
<keyword id="KW-0648">Protein biosynthesis</keyword>
<keyword id="KW-1185">Reference proteome</keyword>
<keyword id="KW-0862">Zinc</keyword>
<feature type="chain" id="PRO_1000022115" description="Isoleucine--tRNA ligase">
    <location>
        <begin position="1"/>
        <end position="940"/>
    </location>
</feature>
<feature type="short sequence motif" description="'HIGH' region">
    <location>
        <begin position="58"/>
        <end position="68"/>
    </location>
</feature>
<feature type="short sequence motif" description="'KMSKS' region">
    <location>
        <begin position="605"/>
        <end position="609"/>
    </location>
</feature>
<feature type="binding site" evidence="1">
    <location>
        <position position="564"/>
    </location>
    <ligand>
        <name>L-isoleucyl-5'-AMP</name>
        <dbReference type="ChEBI" id="CHEBI:178002"/>
    </ligand>
</feature>
<feature type="binding site" evidence="1">
    <location>
        <position position="608"/>
    </location>
    <ligand>
        <name>ATP</name>
        <dbReference type="ChEBI" id="CHEBI:30616"/>
    </ligand>
</feature>
<feature type="binding site" evidence="1">
    <location>
        <position position="903"/>
    </location>
    <ligand>
        <name>Zn(2+)</name>
        <dbReference type="ChEBI" id="CHEBI:29105"/>
    </ligand>
</feature>
<feature type="binding site" evidence="1">
    <location>
        <position position="906"/>
    </location>
    <ligand>
        <name>Zn(2+)</name>
        <dbReference type="ChEBI" id="CHEBI:29105"/>
    </ligand>
</feature>
<feature type="binding site" evidence="1">
    <location>
        <position position="923"/>
    </location>
    <ligand>
        <name>Zn(2+)</name>
        <dbReference type="ChEBI" id="CHEBI:29105"/>
    </ligand>
</feature>
<feature type="binding site" evidence="1">
    <location>
        <position position="926"/>
    </location>
    <ligand>
        <name>Zn(2+)</name>
        <dbReference type="ChEBI" id="CHEBI:29105"/>
    </ligand>
</feature>
<gene>
    <name evidence="1" type="primary">ileS</name>
    <name type="ordered locus">Sama_0924</name>
</gene>
<dbReference type="EC" id="6.1.1.5" evidence="1"/>
<dbReference type="EMBL" id="CP000507">
    <property type="protein sequence ID" value="ABL99131.1"/>
    <property type="molecule type" value="Genomic_DNA"/>
</dbReference>
<dbReference type="RefSeq" id="WP_011759040.1">
    <property type="nucleotide sequence ID" value="NC_008700.1"/>
</dbReference>
<dbReference type="SMR" id="A1S425"/>
<dbReference type="STRING" id="326297.Sama_0924"/>
<dbReference type="KEGG" id="saz:Sama_0924"/>
<dbReference type="eggNOG" id="COG0060">
    <property type="taxonomic scope" value="Bacteria"/>
</dbReference>
<dbReference type="HOGENOM" id="CLU_001493_7_1_6"/>
<dbReference type="OrthoDB" id="9810365at2"/>
<dbReference type="Proteomes" id="UP000009175">
    <property type="component" value="Chromosome"/>
</dbReference>
<dbReference type="GO" id="GO:0005829">
    <property type="term" value="C:cytosol"/>
    <property type="evidence" value="ECO:0007669"/>
    <property type="project" value="TreeGrafter"/>
</dbReference>
<dbReference type="GO" id="GO:0002161">
    <property type="term" value="F:aminoacyl-tRNA deacylase activity"/>
    <property type="evidence" value="ECO:0007669"/>
    <property type="project" value="InterPro"/>
</dbReference>
<dbReference type="GO" id="GO:0005524">
    <property type="term" value="F:ATP binding"/>
    <property type="evidence" value="ECO:0007669"/>
    <property type="project" value="UniProtKB-UniRule"/>
</dbReference>
<dbReference type="GO" id="GO:0004822">
    <property type="term" value="F:isoleucine-tRNA ligase activity"/>
    <property type="evidence" value="ECO:0007669"/>
    <property type="project" value="UniProtKB-UniRule"/>
</dbReference>
<dbReference type="GO" id="GO:0000049">
    <property type="term" value="F:tRNA binding"/>
    <property type="evidence" value="ECO:0007669"/>
    <property type="project" value="InterPro"/>
</dbReference>
<dbReference type="GO" id="GO:0008270">
    <property type="term" value="F:zinc ion binding"/>
    <property type="evidence" value="ECO:0007669"/>
    <property type="project" value="UniProtKB-UniRule"/>
</dbReference>
<dbReference type="GO" id="GO:0006428">
    <property type="term" value="P:isoleucyl-tRNA aminoacylation"/>
    <property type="evidence" value="ECO:0007669"/>
    <property type="project" value="UniProtKB-UniRule"/>
</dbReference>
<dbReference type="CDD" id="cd07960">
    <property type="entry name" value="Anticodon_Ia_Ile_BEm"/>
    <property type="match status" value="1"/>
</dbReference>
<dbReference type="CDD" id="cd00818">
    <property type="entry name" value="IleRS_core"/>
    <property type="match status" value="1"/>
</dbReference>
<dbReference type="FunFam" id="1.10.730.20:FF:000001">
    <property type="entry name" value="Isoleucine--tRNA ligase"/>
    <property type="match status" value="1"/>
</dbReference>
<dbReference type="FunFam" id="3.40.50.620:FF:000042">
    <property type="entry name" value="Isoleucine--tRNA ligase"/>
    <property type="match status" value="1"/>
</dbReference>
<dbReference type="FunFam" id="3.40.50.620:FF:000048">
    <property type="entry name" value="Isoleucine--tRNA ligase"/>
    <property type="match status" value="1"/>
</dbReference>
<dbReference type="FunFam" id="3.90.740.10:FF:000022">
    <property type="entry name" value="Isoleucine--tRNA ligase"/>
    <property type="match status" value="1"/>
</dbReference>
<dbReference type="Gene3D" id="1.10.730.20">
    <property type="match status" value="1"/>
</dbReference>
<dbReference type="Gene3D" id="3.40.50.620">
    <property type="entry name" value="HUPs"/>
    <property type="match status" value="2"/>
</dbReference>
<dbReference type="Gene3D" id="1.10.10.830">
    <property type="entry name" value="Ile-tRNA synthetase CP2 domain-like"/>
    <property type="match status" value="1"/>
</dbReference>
<dbReference type="Gene3D" id="3.90.740.10">
    <property type="entry name" value="Valyl/Leucyl/Isoleucyl-tRNA synthetase, editing domain"/>
    <property type="match status" value="1"/>
</dbReference>
<dbReference type="HAMAP" id="MF_02002">
    <property type="entry name" value="Ile_tRNA_synth_type1"/>
    <property type="match status" value="1"/>
</dbReference>
<dbReference type="InterPro" id="IPR001412">
    <property type="entry name" value="aa-tRNA-synth_I_CS"/>
</dbReference>
<dbReference type="InterPro" id="IPR002300">
    <property type="entry name" value="aa-tRNA-synth_Ia"/>
</dbReference>
<dbReference type="InterPro" id="IPR033708">
    <property type="entry name" value="Anticodon_Ile_BEm"/>
</dbReference>
<dbReference type="InterPro" id="IPR002301">
    <property type="entry name" value="Ile-tRNA-ligase"/>
</dbReference>
<dbReference type="InterPro" id="IPR023585">
    <property type="entry name" value="Ile-tRNA-ligase_type1"/>
</dbReference>
<dbReference type="InterPro" id="IPR050081">
    <property type="entry name" value="Ile-tRNA_ligase"/>
</dbReference>
<dbReference type="InterPro" id="IPR013155">
    <property type="entry name" value="M/V/L/I-tRNA-synth_anticd-bd"/>
</dbReference>
<dbReference type="InterPro" id="IPR014729">
    <property type="entry name" value="Rossmann-like_a/b/a_fold"/>
</dbReference>
<dbReference type="InterPro" id="IPR009080">
    <property type="entry name" value="tRNAsynth_Ia_anticodon-bd"/>
</dbReference>
<dbReference type="InterPro" id="IPR009008">
    <property type="entry name" value="Val/Leu/Ile-tRNA-synth_edit"/>
</dbReference>
<dbReference type="InterPro" id="IPR010663">
    <property type="entry name" value="Znf_FPG/IleRS"/>
</dbReference>
<dbReference type="NCBIfam" id="TIGR00392">
    <property type="entry name" value="ileS"/>
    <property type="match status" value="1"/>
</dbReference>
<dbReference type="PANTHER" id="PTHR42765:SF1">
    <property type="entry name" value="ISOLEUCINE--TRNA LIGASE, MITOCHONDRIAL"/>
    <property type="match status" value="1"/>
</dbReference>
<dbReference type="PANTHER" id="PTHR42765">
    <property type="entry name" value="SOLEUCYL-TRNA SYNTHETASE"/>
    <property type="match status" value="1"/>
</dbReference>
<dbReference type="Pfam" id="PF08264">
    <property type="entry name" value="Anticodon_1"/>
    <property type="match status" value="1"/>
</dbReference>
<dbReference type="Pfam" id="PF00133">
    <property type="entry name" value="tRNA-synt_1"/>
    <property type="match status" value="1"/>
</dbReference>
<dbReference type="Pfam" id="PF06827">
    <property type="entry name" value="zf-FPG_IleRS"/>
    <property type="match status" value="1"/>
</dbReference>
<dbReference type="PRINTS" id="PR00984">
    <property type="entry name" value="TRNASYNTHILE"/>
</dbReference>
<dbReference type="SUPFAM" id="SSF47323">
    <property type="entry name" value="Anticodon-binding domain of a subclass of class I aminoacyl-tRNA synthetases"/>
    <property type="match status" value="1"/>
</dbReference>
<dbReference type="SUPFAM" id="SSF52374">
    <property type="entry name" value="Nucleotidylyl transferase"/>
    <property type="match status" value="1"/>
</dbReference>
<dbReference type="SUPFAM" id="SSF50677">
    <property type="entry name" value="ValRS/IleRS/LeuRS editing domain"/>
    <property type="match status" value="1"/>
</dbReference>
<dbReference type="PROSITE" id="PS00178">
    <property type="entry name" value="AA_TRNA_LIGASE_I"/>
    <property type="match status" value="1"/>
</dbReference>
<accession>A1S425</accession>